<organism>
    <name type="scientific">Prochlorococcus marinus subsp. pastoris (strain CCMP1986 / NIES-2087 / MED4)</name>
    <dbReference type="NCBI Taxonomy" id="59919"/>
    <lineage>
        <taxon>Bacteria</taxon>
        <taxon>Bacillati</taxon>
        <taxon>Cyanobacteriota</taxon>
        <taxon>Cyanophyceae</taxon>
        <taxon>Synechococcales</taxon>
        <taxon>Prochlorococcaceae</taxon>
        <taxon>Prochlorococcus</taxon>
    </lineage>
</organism>
<reference key="1">
    <citation type="journal article" date="2003" name="Nature">
        <title>Genome divergence in two Prochlorococcus ecotypes reflects oceanic niche differentiation.</title>
        <authorList>
            <person name="Rocap G."/>
            <person name="Larimer F.W."/>
            <person name="Lamerdin J.E."/>
            <person name="Malfatti S."/>
            <person name="Chain P."/>
            <person name="Ahlgren N.A."/>
            <person name="Arellano A."/>
            <person name="Coleman M."/>
            <person name="Hauser L."/>
            <person name="Hess W.R."/>
            <person name="Johnson Z.I."/>
            <person name="Land M.L."/>
            <person name="Lindell D."/>
            <person name="Post A.F."/>
            <person name="Regala W."/>
            <person name="Shah M."/>
            <person name="Shaw S.L."/>
            <person name="Steglich C."/>
            <person name="Sullivan M.B."/>
            <person name="Ting C.S."/>
            <person name="Tolonen A."/>
            <person name="Webb E.A."/>
            <person name="Zinser E.R."/>
            <person name="Chisholm S.W."/>
        </authorList>
    </citation>
    <scope>NUCLEOTIDE SEQUENCE [LARGE SCALE GENOMIC DNA]</scope>
    <source>
        <strain>CCMP1986 / NIES-2087 / MED4</strain>
    </source>
</reference>
<keyword id="KW-0004">4Fe-4S</keyword>
<keyword id="KW-0249">Electron transport</keyword>
<keyword id="KW-0408">Iron</keyword>
<keyword id="KW-0411">Iron-sulfur</keyword>
<keyword id="KW-0472">Membrane</keyword>
<keyword id="KW-0479">Metal-binding</keyword>
<keyword id="KW-0560">Oxidoreductase</keyword>
<keyword id="KW-0602">Photosynthesis</keyword>
<keyword id="KW-0603">Photosystem I</keyword>
<keyword id="KW-0677">Repeat</keyword>
<keyword id="KW-0793">Thylakoid</keyword>
<keyword id="KW-0813">Transport</keyword>
<dbReference type="EC" id="1.97.1.12" evidence="2"/>
<dbReference type="EMBL" id="BX548174">
    <property type="protein sequence ID" value="CAE20066.1"/>
    <property type="molecule type" value="Genomic_DNA"/>
</dbReference>
<dbReference type="RefSeq" id="WP_007099573.1">
    <property type="nucleotide sequence ID" value="NC_005072.1"/>
</dbReference>
<dbReference type="SMR" id="Q7UZQ1"/>
<dbReference type="STRING" id="59919.PMM1607"/>
<dbReference type="GeneID" id="60200697"/>
<dbReference type="KEGG" id="pmm:PMM1607"/>
<dbReference type="eggNOG" id="COG1143">
    <property type="taxonomic scope" value="Bacteria"/>
</dbReference>
<dbReference type="HOGENOM" id="CLU_139698_8_0_3"/>
<dbReference type="OrthoDB" id="9804603at2"/>
<dbReference type="Proteomes" id="UP000001026">
    <property type="component" value="Chromosome"/>
</dbReference>
<dbReference type="GO" id="GO:0009522">
    <property type="term" value="C:photosystem I"/>
    <property type="evidence" value="ECO:0007669"/>
    <property type="project" value="UniProtKB-KW"/>
</dbReference>
<dbReference type="GO" id="GO:0031676">
    <property type="term" value="C:plasma membrane-derived thylakoid membrane"/>
    <property type="evidence" value="ECO:0007669"/>
    <property type="project" value="UniProtKB-SubCell"/>
</dbReference>
<dbReference type="GO" id="GO:0051539">
    <property type="term" value="F:4 iron, 4 sulfur cluster binding"/>
    <property type="evidence" value="ECO:0007669"/>
    <property type="project" value="UniProtKB-KW"/>
</dbReference>
<dbReference type="GO" id="GO:0009055">
    <property type="term" value="F:electron transfer activity"/>
    <property type="evidence" value="ECO:0007669"/>
    <property type="project" value="UniProtKB-UniRule"/>
</dbReference>
<dbReference type="GO" id="GO:0046872">
    <property type="term" value="F:metal ion binding"/>
    <property type="evidence" value="ECO:0007669"/>
    <property type="project" value="UniProtKB-KW"/>
</dbReference>
<dbReference type="GO" id="GO:0016491">
    <property type="term" value="F:oxidoreductase activity"/>
    <property type="evidence" value="ECO:0007669"/>
    <property type="project" value="UniProtKB-KW"/>
</dbReference>
<dbReference type="GO" id="GO:0009773">
    <property type="term" value="P:photosynthetic electron transport in photosystem I"/>
    <property type="evidence" value="ECO:0007669"/>
    <property type="project" value="InterPro"/>
</dbReference>
<dbReference type="FunFam" id="3.30.70.20:FF:000001">
    <property type="entry name" value="Photosystem I iron-sulfur center"/>
    <property type="match status" value="1"/>
</dbReference>
<dbReference type="Gene3D" id="3.30.70.20">
    <property type="match status" value="1"/>
</dbReference>
<dbReference type="HAMAP" id="MF_01303">
    <property type="entry name" value="PSI_PsaC"/>
    <property type="match status" value="1"/>
</dbReference>
<dbReference type="InterPro" id="IPR017896">
    <property type="entry name" value="4Fe4S_Fe-S-bd"/>
</dbReference>
<dbReference type="InterPro" id="IPR017900">
    <property type="entry name" value="4Fe4S_Fe_S_CS"/>
</dbReference>
<dbReference type="InterPro" id="IPR050157">
    <property type="entry name" value="PSI_iron-sulfur_center"/>
</dbReference>
<dbReference type="InterPro" id="IPR017491">
    <property type="entry name" value="PSI_PsaC"/>
</dbReference>
<dbReference type="NCBIfam" id="TIGR03048">
    <property type="entry name" value="PS_I_psaC"/>
    <property type="match status" value="1"/>
</dbReference>
<dbReference type="PANTHER" id="PTHR24960:SF79">
    <property type="entry name" value="PHOTOSYSTEM I IRON-SULFUR CENTER"/>
    <property type="match status" value="1"/>
</dbReference>
<dbReference type="PANTHER" id="PTHR24960">
    <property type="entry name" value="PHOTOSYSTEM I IRON-SULFUR CENTER-RELATED"/>
    <property type="match status" value="1"/>
</dbReference>
<dbReference type="Pfam" id="PF12838">
    <property type="entry name" value="Fer4_7"/>
    <property type="match status" value="1"/>
</dbReference>
<dbReference type="SUPFAM" id="SSF54862">
    <property type="entry name" value="4Fe-4S ferredoxins"/>
    <property type="match status" value="1"/>
</dbReference>
<dbReference type="PROSITE" id="PS00198">
    <property type="entry name" value="4FE4S_FER_1"/>
    <property type="match status" value="2"/>
</dbReference>
<dbReference type="PROSITE" id="PS51379">
    <property type="entry name" value="4FE4S_FER_2"/>
    <property type="match status" value="2"/>
</dbReference>
<gene>
    <name evidence="2" type="primary">psaC</name>
    <name type="ordered locus">PMM1607</name>
</gene>
<feature type="initiator methionine" description="Removed" evidence="1">
    <location>
        <position position="1"/>
    </location>
</feature>
<feature type="chain" id="PRO_0000062017" description="Photosystem I iron-sulfur center">
    <location>
        <begin position="2"/>
        <end position="81"/>
    </location>
</feature>
<feature type="domain" description="4Fe-4S ferredoxin-type 1" evidence="2">
    <location>
        <begin position="2"/>
        <end position="31"/>
    </location>
</feature>
<feature type="domain" description="4Fe-4S ferredoxin-type 2" evidence="2">
    <location>
        <begin position="37"/>
        <end position="68"/>
    </location>
</feature>
<feature type="binding site" evidence="2">
    <location>
        <position position="11"/>
    </location>
    <ligand>
        <name>[4Fe-4S] cluster</name>
        <dbReference type="ChEBI" id="CHEBI:49883"/>
        <label>1</label>
    </ligand>
</feature>
<feature type="binding site" evidence="2">
    <location>
        <position position="14"/>
    </location>
    <ligand>
        <name>[4Fe-4S] cluster</name>
        <dbReference type="ChEBI" id="CHEBI:49883"/>
        <label>1</label>
    </ligand>
</feature>
<feature type="binding site" evidence="2">
    <location>
        <position position="17"/>
    </location>
    <ligand>
        <name>[4Fe-4S] cluster</name>
        <dbReference type="ChEBI" id="CHEBI:49883"/>
        <label>1</label>
    </ligand>
</feature>
<feature type="binding site" evidence="2">
    <location>
        <position position="21"/>
    </location>
    <ligand>
        <name>[4Fe-4S] cluster</name>
        <dbReference type="ChEBI" id="CHEBI:49883"/>
        <label>2</label>
    </ligand>
</feature>
<feature type="binding site" evidence="2">
    <location>
        <position position="48"/>
    </location>
    <ligand>
        <name>[4Fe-4S] cluster</name>
        <dbReference type="ChEBI" id="CHEBI:49883"/>
        <label>2</label>
    </ligand>
</feature>
<feature type="binding site" evidence="2">
    <location>
        <position position="51"/>
    </location>
    <ligand>
        <name>[4Fe-4S] cluster</name>
        <dbReference type="ChEBI" id="CHEBI:49883"/>
        <label>2</label>
    </ligand>
</feature>
<feature type="binding site" evidence="2">
    <location>
        <position position="54"/>
    </location>
    <ligand>
        <name>[4Fe-4S] cluster</name>
        <dbReference type="ChEBI" id="CHEBI:49883"/>
        <label>2</label>
    </ligand>
</feature>
<feature type="binding site" evidence="2">
    <location>
        <position position="58"/>
    </location>
    <ligand>
        <name>[4Fe-4S] cluster</name>
        <dbReference type="ChEBI" id="CHEBI:49883"/>
        <label>1</label>
    </ligand>
</feature>
<evidence type="ECO:0000250" key="1"/>
<evidence type="ECO:0000255" key="2">
    <source>
        <dbReference type="HAMAP-Rule" id="MF_01303"/>
    </source>
</evidence>
<sequence length="81" mass="8828">MSHAVKIYDTCIGCTQCVRACPLDVLEMVPWDGCKAGQIASSPRTEDCVGCKRCETACPTDFLSIRVYLGDETSRSMGLAY</sequence>
<proteinExistence type="inferred from homology"/>
<comment type="function">
    <text evidence="2">Apoprotein for the two 4Fe-4S centers FA and FB of photosystem I (PSI); essential for photochemical activity. FB is the terminal electron acceptor of PSI, donating electrons to ferredoxin. The C-terminus interacts with PsaA/B/D and helps assemble the protein into the PSI complex. Required for binding of PsaD and PsaE to PSI. PSI is a plastocyanin/cytochrome c6-ferredoxin oxidoreductase, converting photonic excitation into a charge separation, which transfers an electron from the donor P700 chlorophyll pair to the spectroscopically characterized acceptors A0, A1, FX, FA and FB in turn.</text>
</comment>
<comment type="catalytic activity">
    <reaction evidence="2">
        <text>reduced [plastocyanin] + hnu + oxidized [2Fe-2S]-[ferredoxin] = oxidized [plastocyanin] + reduced [2Fe-2S]-[ferredoxin]</text>
        <dbReference type="Rhea" id="RHEA:30407"/>
        <dbReference type="Rhea" id="RHEA-COMP:10000"/>
        <dbReference type="Rhea" id="RHEA-COMP:10001"/>
        <dbReference type="Rhea" id="RHEA-COMP:10039"/>
        <dbReference type="Rhea" id="RHEA-COMP:10040"/>
        <dbReference type="ChEBI" id="CHEBI:29036"/>
        <dbReference type="ChEBI" id="CHEBI:30212"/>
        <dbReference type="ChEBI" id="CHEBI:33737"/>
        <dbReference type="ChEBI" id="CHEBI:33738"/>
        <dbReference type="ChEBI" id="CHEBI:49552"/>
        <dbReference type="EC" id="1.97.1.12"/>
    </reaction>
</comment>
<comment type="cofactor">
    <cofactor evidence="2">
        <name>[4Fe-4S] cluster</name>
        <dbReference type="ChEBI" id="CHEBI:49883"/>
    </cofactor>
    <text evidence="2">Binds 2 [4Fe-4S] clusters. Cluster 2 is most probably the spectroscopically characterized electron acceptor FA and cluster 1 is most probably FB.</text>
</comment>
<comment type="subunit">
    <text evidence="2">The cyanobacterial PSI reaction center is composed of one copy each of PsaA,B,C,D,E,F,I,J,K,L,M and X, and forms trimeric complexes.</text>
</comment>
<comment type="subcellular location">
    <subcellularLocation>
        <location evidence="2">Cellular thylakoid membrane</location>
        <topology evidence="2">Peripheral membrane protein</topology>
        <orientation evidence="2">Cytoplasmic side</orientation>
    </subcellularLocation>
</comment>
<protein>
    <recommendedName>
        <fullName evidence="2">Photosystem I iron-sulfur center</fullName>
        <ecNumber evidence="2">1.97.1.12</ecNumber>
    </recommendedName>
    <alternativeName>
        <fullName evidence="2">9 kDa polypeptide</fullName>
    </alternativeName>
    <alternativeName>
        <fullName evidence="2">PSI-C</fullName>
    </alternativeName>
    <alternativeName>
        <fullName evidence="2">Photosystem I subunit VII</fullName>
    </alternativeName>
    <alternativeName>
        <fullName evidence="2">PsaC</fullName>
    </alternativeName>
</protein>
<name>PSAC_PROMP</name>
<accession>Q7UZQ1</accession>